<sequence>MNPNQKILCTSATALVIGTIAVLIGIVNLGLNIGLHLKPSCNCSRSQPEATNASQTIINNYYNETNITQISNTNIQVEERASREFNNLTKGLCTINSWHIYGKDNAVRIGEDSDVLVTREPYVSCDPDECRFYALSQGTTIRGKHSNGTIHDRSQYRDLISWPLSSPPTVYNSRVECIGWSSTSCHDGRARMSICISGPNNNASAVIWYNRRPVTEINTWARNILRTQESECVCQNGVCPVVFTDGSATGPAETRIYYFKEGKILKWEPLTGTAKHIEECSCYGEQAGVTCTCRDNWQGSNRPVIQIDPVAMTHTSQYICSPVLTDNPRPNDPTVGKCNDPYPGNNNNGVKGFSYLDGGNTWLGRTISIASRSGYEMLKVPNALTDDRSKPTQGQTIVLNTDWSGYSGSFMDYWAEGECYRACFYVELIRGRPKEDKVWWTSNSIVSMCSSTEFLGQWNWPDGAKIEYFL</sequence>
<gene>
    <name evidence="1" type="primary">NA</name>
</gene>
<feature type="chain" id="PRO_0000078725" description="Neuraminidase">
    <location>
        <begin position="1"/>
        <end position="470"/>
    </location>
</feature>
<feature type="topological domain" description="Intravirion" evidence="1">
    <location>
        <begin position="1"/>
        <end position="14"/>
    </location>
</feature>
<feature type="transmembrane region" description="Helical" evidence="1">
    <location>
        <begin position="15"/>
        <end position="35"/>
    </location>
</feature>
<feature type="topological domain" description="Virion surface" evidence="1">
    <location>
        <begin position="36"/>
        <end position="470"/>
    </location>
</feature>
<feature type="region of interest" description="Involved in apical transport and lipid raft association" evidence="1">
    <location>
        <begin position="11"/>
        <end position="33"/>
    </location>
</feature>
<feature type="region of interest" description="Hypervariable stalk region" evidence="1">
    <location>
        <begin position="36"/>
        <end position="89"/>
    </location>
</feature>
<feature type="region of interest" description="Head of neuraminidase" evidence="1">
    <location>
        <begin position="92"/>
        <end position="470"/>
    </location>
</feature>
<feature type="active site" description="Proton donor/acceptor" evidence="1">
    <location>
        <position position="152"/>
    </location>
</feature>
<feature type="active site" description="Nucleophile" evidence="1">
    <location>
        <position position="406"/>
    </location>
</feature>
<feature type="binding site" evidence="1">
    <location>
        <position position="119"/>
    </location>
    <ligand>
        <name>substrate</name>
    </ligand>
</feature>
<feature type="binding site" evidence="1">
    <location>
        <position position="153"/>
    </location>
    <ligand>
        <name>substrate</name>
    </ligand>
</feature>
<feature type="binding site" evidence="1">
    <location>
        <begin position="278"/>
        <end position="279"/>
    </location>
    <ligand>
        <name>substrate</name>
    </ligand>
</feature>
<feature type="binding site" evidence="1">
    <location>
        <position position="294"/>
    </location>
    <ligand>
        <name>substrate</name>
    </ligand>
</feature>
<feature type="binding site" evidence="1 3">
    <location>
        <position position="295"/>
    </location>
    <ligand>
        <name>Ca(2+)</name>
        <dbReference type="ChEBI" id="CHEBI:29108"/>
    </ligand>
</feature>
<feature type="binding site" evidence="1 3">
    <location>
        <position position="299"/>
    </location>
    <ligand>
        <name>Ca(2+)</name>
        <dbReference type="ChEBI" id="CHEBI:29108"/>
    </ligand>
</feature>
<feature type="binding site" evidence="1 3">
    <location>
        <position position="326"/>
    </location>
    <ligand>
        <name>Ca(2+)</name>
        <dbReference type="ChEBI" id="CHEBI:29108"/>
    </ligand>
</feature>
<feature type="binding site" evidence="1 3">
    <location>
        <position position="348"/>
    </location>
    <ligand>
        <name>Ca(2+)</name>
        <dbReference type="ChEBI" id="CHEBI:29108"/>
    </ligand>
</feature>
<feature type="binding site" evidence="1">
    <location>
        <position position="372"/>
    </location>
    <ligand>
        <name>substrate</name>
    </ligand>
</feature>
<feature type="glycosylation site" description="N-linked (GlcNAc...) asparagine; by host" evidence="1">
    <location>
        <position position="42"/>
    </location>
</feature>
<feature type="glycosylation site" description="N-linked (GlcNAc...) asparagine; by host" evidence="1">
    <location>
        <position position="52"/>
    </location>
</feature>
<feature type="glycosylation site" description="N-linked (GlcNAc...) asparagine; by host" evidence="1">
    <location>
        <position position="63"/>
    </location>
</feature>
<feature type="glycosylation site" description="N-linked (GlcNAc...) asparagine; by host" evidence="1">
    <location>
        <position position="66"/>
    </location>
</feature>
<feature type="glycosylation site" description="N-linked (GlcNAc...) asparagine; by host" evidence="1 2 3">
    <location>
        <position position="87"/>
    </location>
</feature>
<feature type="glycosylation site" description="N-linked (GlcNAc...) asparagine; by host" evidence="1 3">
    <location>
        <position position="147"/>
    </location>
</feature>
<feature type="glycosylation site" description="N-linked (GlcNAc...) (high mannose) asparagine; by host" evidence="2">
    <location>
        <position position="202"/>
    </location>
</feature>
<feature type="glycosylation site" description="N-linked (GlcNAc...) asparagine; by host" evidence="1">
    <location>
        <position position="202"/>
    </location>
</feature>
<feature type="disulfide bond" evidence="1 3">
    <location>
        <begin position="93"/>
        <end position="419"/>
    </location>
</feature>
<feature type="disulfide bond" evidence="1 3">
    <location>
        <begin position="125"/>
        <end position="130"/>
    </location>
</feature>
<feature type="disulfide bond" evidence="3">
    <location>
        <begin position="177"/>
        <end position="195"/>
    </location>
</feature>
<feature type="disulfide bond" evidence="1 3">
    <location>
        <begin position="185"/>
        <end position="232"/>
    </location>
</feature>
<feature type="disulfide bond" evidence="1 3">
    <location>
        <begin position="234"/>
        <end position="239"/>
    </location>
</feature>
<feature type="disulfide bond" evidence="1 3">
    <location>
        <begin position="280"/>
        <end position="293"/>
    </location>
</feature>
<feature type="disulfide bond" evidence="1 3">
    <location>
        <begin position="282"/>
        <end position="291"/>
    </location>
</feature>
<feature type="disulfide bond" evidence="1 3">
    <location>
        <begin position="320"/>
        <end position="338"/>
    </location>
</feature>
<feature type="disulfide bond" evidence="1 3">
    <location>
        <begin position="423"/>
        <end position="449"/>
    </location>
</feature>
<feature type="strand" evidence="6">
    <location>
        <begin position="96"/>
        <end position="104"/>
    </location>
</feature>
<feature type="helix" evidence="6">
    <location>
        <begin position="106"/>
        <end position="110"/>
    </location>
</feature>
<feature type="strand" evidence="6">
    <location>
        <begin position="122"/>
        <end position="126"/>
    </location>
</feature>
<feature type="strand" evidence="6">
    <location>
        <begin position="129"/>
        <end position="135"/>
    </location>
</feature>
<feature type="strand" evidence="6">
    <location>
        <begin position="138"/>
        <end position="143"/>
    </location>
</feature>
<feature type="helix" evidence="6">
    <location>
        <begin position="144"/>
        <end position="146"/>
    </location>
</feature>
<feature type="turn" evidence="6">
    <location>
        <begin position="147"/>
        <end position="150"/>
    </location>
</feature>
<feature type="strand" evidence="6">
    <location>
        <begin position="158"/>
        <end position="163"/>
    </location>
</feature>
<feature type="turn" evidence="6">
    <location>
        <begin position="170"/>
        <end position="172"/>
    </location>
</feature>
<feature type="strand" evidence="6">
    <location>
        <begin position="174"/>
        <end position="186"/>
    </location>
</feature>
<feature type="strand" evidence="6">
    <location>
        <begin position="191"/>
        <end position="198"/>
    </location>
</feature>
<feature type="strand" evidence="6">
    <location>
        <begin position="204"/>
        <end position="218"/>
    </location>
</feature>
<feature type="strand" evidence="6">
    <location>
        <begin position="220"/>
        <end position="223"/>
    </location>
</feature>
<feature type="strand" evidence="4">
    <location>
        <begin position="229"/>
        <end position="231"/>
    </location>
</feature>
<feature type="strand" evidence="6">
    <location>
        <begin position="238"/>
        <end position="246"/>
    </location>
</feature>
<feature type="strand" evidence="6">
    <location>
        <begin position="248"/>
        <end position="250"/>
    </location>
</feature>
<feature type="strand" evidence="6">
    <location>
        <begin position="252"/>
        <end position="260"/>
    </location>
</feature>
<feature type="strand" evidence="6">
    <location>
        <begin position="263"/>
        <end position="269"/>
    </location>
</feature>
<feature type="strand" evidence="6">
    <location>
        <begin position="281"/>
        <end position="285"/>
    </location>
</feature>
<feature type="strand" evidence="6">
    <location>
        <begin position="288"/>
        <end position="292"/>
    </location>
</feature>
<feature type="strand" evidence="6">
    <location>
        <begin position="296"/>
        <end position="298"/>
    </location>
</feature>
<feature type="strand" evidence="6">
    <location>
        <begin position="303"/>
        <end position="308"/>
    </location>
</feature>
<feature type="turn" evidence="6">
    <location>
        <begin position="309"/>
        <end position="312"/>
    </location>
</feature>
<feature type="strand" evidence="6">
    <location>
        <begin position="313"/>
        <end position="318"/>
    </location>
</feature>
<feature type="strand" evidence="6">
    <location>
        <begin position="326"/>
        <end position="328"/>
    </location>
</feature>
<feature type="strand" evidence="6">
    <location>
        <begin position="338"/>
        <end position="340"/>
    </location>
</feature>
<feature type="strand" evidence="5">
    <location>
        <begin position="354"/>
        <end position="357"/>
    </location>
</feature>
<feature type="helix" evidence="7">
    <location>
        <begin position="358"/>
        <end position="360"/>
    </location>
</feature>
<feature type="strand" evidence="6">
    <location>
        <begin position="362"/>
        <end position="365"/>
    </location>
</feature>
<feature type="strand" evidence="6">
    <location>
        <begin position="369"/>
        <end position="379"/>
    </location>
</feature>
<feature type="turn" evidence="6">
    <location>
        <begin position="381"/>
        <end position="385"/>
    </location>
</feature>
<feature type="strand" evidence="6">
    <location>
        <begin position="392"/>
        <end position="403"/>
    </location>
</feature>
<feature type="strand" evidence="6">
    <location>
        <begin position="407"/>
        <end position="410"/>
    </location>
</feature>
<feature type="strand" evidence="6">
    <location>
        <begin position="415"/>
        <end position="420"/>
    </location>
</feature>
<feature type="strand" evidence="6">
    <location>
        <begin position="423"/>
        <end position="431"/>
    </location>
</feature>
<feature type="turn" evidence="6">
    <location>
        <begin position="432"/>
        <end position="434"/>
    </location>
</feature>
<feature type="strand" evidence="6">
    <location>
        <begin position="437"/>
        <end position="439"/>
    </location>
</feature>
<feature type="strand" evidence="6">
    <location>
        <begin position="441"/>
        <end position="453"/>
    </location>
</feature>
<feature type="helix" evidence="6">
    <location>
        <begin position="466"/>
        <end position="469"/>
    </location>
</feature>
<evidence type="ECO:0000255" key="1">
    <source>
        <dbReference type="HAMAP-Rule" id="MF_04071"/>
    </source>
</evidence>
<evidence type="ECO:0000269" key="2">
    <source>
    </source>
</evidence>
<evidence type="ECO:0000269" key="3">
    <source>
    </source>
</evidence>
<evidence type="ECO:0007829" key="4">
    <source>
        <dbReference type="PDB" id="1NCD"/>
    </source>
</evidence>
<evidence type="ECO:0007829" key="5">
    <source>
        <dbReference type="PDB" id="1NMA"/>
    </source>
</evidence>
<evidence type="ECO:0007829" key="6">
    <source>
        <dbReference type="PDB" id="1NMB"/>
    </source>
</evidence>
<evidence type="ECO:0007829" key="7">
    <source>
        <dbReference type="PDB" id="2B8H"/>
    </source>
</evidence>
<proteinExistence type="evidence at protein level"/>
<organismHost>
    <name type="scientific">Aves</name>
    <dbReference type="NCBI Taxonomy" id="8782"/>
</organismHost>
<organismHost>
    <name type="scientific">Cetacea</name>
    <name type="common">whales</name>
    <dbReference type="NCBI Taxonomy" id="9721"/>
</organismHost>
<dbReference type="EC" id="3.2.1.18" evidence="1"/>
<dbReference type="EMBL" id="M17812">
    <property type="protein sequence ID" value="AAA43575.1"/>
    <property type="molecule type" value="Genomic_RNA"/>
</dbReference>
<dbReference type="PDB" id="1NCD">
    <property type="method" value="X-ray"/>
    <property type="resolution" value="2.90 A"/>
    <property type="chains" value="N=83-470"/>
</dbReference>
<dbReference type="PDB" id="1NMA">
    <property type="method" value="X-ray"/>
    <property type="resolution" value="3.00 A"/>
    <property type="chains" value="N=83-470"/>
</dbReference>
<dbReference type="PDB" id="1NMB">
    <property type="method" value="X-ray"/>
    <property type="resolution" value="2.20 A"/>
    <property type="chains" value="N=1-470"/>
</dbReference>
<dbReference type="PDB" id="2B8H">
    <property type="method" value="X-ray"/>
    <property type="resolution" value="2.20 A"/>
    <property type="chains" value="A/B/C/D=83-470"/>
</dbReference>
<dbReference type="PDBsum" id="1NCD"/>
<dbReference type="PDBsum" id="1NMA"/>
<dbReference type="PDBsum" id="1NMB"/>
<dbReference type="PDBsum" id="2B8H"/>
<dbReference type="SMR" id="P05803"/>
<dbReference type="MINT" id="P05803"/>
<dbReference type="CAZy" id="GH34">
    <property type="family name" value="Glycoside Hydrolase Family 34"/>
</dbReference>
<dbReference type="GlyCosmos" id="P05803">
    <property type="glycosylation" value="7 sites, No reported glycans"/>
</dbReference>
<dbReference type="iPTMnet" id="P05803"/>
<dbReference type="ABCD" id="P05803">
    <property type="antibodies" value="1 sequenced antibody"/>
</dbReference>
<dbReference type="EvolutionaryTrace" id="P05803"/>
<dbReference type="PRO" id="PR:P05803"/>
<dbReference type="GO" id="GO:0020002">
    <property type="term" value="C:host cell plasma membrane"/>
    <property type="evidence" value="ECO:0007669"/>
    <property type="project" value="UniProtKB-SubCell"/>
</dbReference>
<dbReference type="GO" id="GO:0016020">
    <property type="term" value="C:membrane"/>
    <property type="evidence" value="ECO:0007669"/>
    <property type="project" value="UniProtKB-UniRule"/>
</dbReference>
<dbReference type="GO" id="GO:0055036">
    <property type="term" value="C:virion membrane"/>
    <property type="evidence" value="ECO:0007669"/>
    <property type="project" value="UniProtKB-SubCell"/>
</dbReference>
<dbReference type="GO" id="GO:0004308">
    <property type="term" value="F:exo-alpha-sialidase activity"/>
    <property type="evidence" value="ECO:0007669"/>
    <property type="project" value="UniProtKB-UniRule"/>
</dbReference>
<dbReference type="GO" id="GO:0046872">
    <property type="term" value="F:metal ion binding"/>
    <property type="evidence" value="ECO:0007669"/>
    <property type="project" value="UniProtKB-UniRule"/>
</dbReference>
<dbReference type="GO" id="GO:0005975">
    <property type="term" value="P:carbohydrate metabolic process"/>
    <property type="evidence" value="ECO:0007669"/>
    <property type="project" value="InterPro"/>
</dbReference>
<dbReference type="GO" id="GO:0046761">
    <property type="term" value="P:viral budding from plasma membrane"/>
    <property type="evidence" value="ECO:0007669"/>
    <property type="project" value="UniProtKB-UniRule"/>
</dbReference>
<dbReference type="CDD" id="cd15483">
    <property type="entry name" value="Influenza_NA"/>
    <property type="match status" value="1"/>
</dbReference>
<dbReference type="Gene3D" id="2.120.10.10">
    <property type="match status" value="1"/>
</dbReference>
<dbReference type="HAMAP" id="MF_04071">
    <property type="entry name" value="INFV_NRAM"/>
    <property type="match status" value="1"/>
</dbReference>
<dbReference type="InterPro" id="IPR001860">
    <property type="entry name" value="Glyco_hydro_34"/>
</dbReference>
<dbReference type="InterPro" id="IPR033654">
    <property type="entry name" value="Sialidase_Influenza_A/B"/>
</dbReference>
<dbReference type="InterPro" id="IPR036278">
    <property type="entry name" value="Sialidase_sf"/>
</dbReference>
<dbReference type="Pfam" id="PF00064">
    <property type="entry name" value="Neur"/>
    <property type="match status" value="1"/>
</dbReference>
<dbReference type="SUPFAM" id="SSF50939">
    <property type="entry name" value="Sialidases"/>
    <property type="match status" value="1"/>
</dbReference>
<protein>
    <recommendedName>
        <fullName evidence="1">Neuraminidase</fullName>
        <ecNumber evidence="1">3.2.1.18</ecNumber>
    </recommendedName>
</protein>
<accession>P05803</accession>
<organism>
    <name type="scientific">Influenza A virus (strain A/Whale/Maine/1/1984 H13N9)</name>
    <dbReference type="NCBI Taxonomy" id="11484"/>
    <lineage>
        <taxon>Viruses</taxon>
        <taxon>Riboviria</taxon>
        <taxon>Orthornavirae</taxon>
        <taxon>Negarnaviricota</taxon>
        <taxon>Polyploviricotina</taxon>
        <taxon>Insthoviricetes</taxon>
        <taxon>Articulavirales</taxon>
        <taxon>Orthomyxoviridae</taxon>
        <taxon>Alphainfluenzavirus</taxon>
        <taxon>Alphainfluenzavirus influenzae</taxon>
        <taxon>Influenza A virus</taxon>
    </lineage>
</organism>
<comment type="function">
    <text evidence="1">Catalyzes the removal of terminal sialic acid residues from viral and cellular glycoconjugates. Cleaves off the terminal sialic acids on the glycosylated HA during virus budding to facilitate virus release. Additionally helps virus spread through the circulation by further removing sialic acids from the cell surface. These cleavages prevent self-aggregation and ensure the efficient spread of the progeny virus from cell to cell. Otherwise, infection would be limited to one round of replication. Described as a receptor-destroying enzyme because it cleaves a terminal sialic acid from the cellular receptors. May facilitate viral invasion of the upper airways by cleaving the sialic acid moieties on the mucin of the airway epithelial cells. Likely to plays a role in the budding process through its association with lipid rafts during intracellular transport. May additionally display a raft-association independent effect on budding. Plays a role in the determination of host range restriction on replication and virulence. Sialidase activity in late endosome/lysosome traffic seems to enhance virus replication.</text>
</comment>
<comment type="catalytic activity">
    <reaction evidence="1">
        <text>Hydrolysis of alpha-(2-&gt;3)-, alpha-(2-&gt;6)-, alpha-(2-&gt;8)- glycosidic linkages of terminal sialic acid residues in oligosaccharides, glycoproteins, glycolipids, colominic acid and synthetic substrates.</text>
        <dbReference type="EC" id="3.2.1.18"/>
    </reaction>
</comment>
<comment type="cofactor">
    <cofactor evidence="1">
        <name>Ca(2+)</name>
        <dbReference type="ChEBI" id="CHEBI:29108"/>
    </cofactor>
    <text>Binds 1 Ca(2+) ion per subunit.</text>
</comment>
<comment type="activity regulation">
    <text evidence="1">Inhibited by the neuraminidase inhibitors zanamivir (Relenza) and oseltamivir (Tamiflu). These drugs interfere with the release of progeny virus from infected cells and are effective against all influenza strains. Resistance to neuraminidase inhibitors is quite rare.</text>
</comment>
<comment type="subunit">
    <text evidence="1 2 3">Homotetramer.</text>
</comment>
<comment type="subcellular location">
    <subcellularLocation>
        <location evidence="1">Virion membrane</location>
    </subcellularLocation>
    <subcellularLocation>
        <location evidence="1">Host apical cell membrane</location>
        <topology evidence="1">Single-pass type II membrane protein</topology>
    </subcellularLocation>
    <text evidence="1">Preferentially accumulates at the apical plasma membrane in infected polarized epithelial cells, which is the virus assembly site. Uses lipid rafts for cell surface transport and apical sorting. In the virion, forms a mushroom-shaped spike on the surface of the membrane.</text>
</comment>
<comment type="domain">
    <text evidence="1">Intact N-terminus is essential for virion morphogenesis. Possesses two apical sorting signals, one in the ectodomain, which is likely to be a glycan, and the other in the transmembrane domain. The transmembrane domain also plays a role in lipid raft association.</text>
</comment>
<comment type="PTM">
    <text evidence="1 2 3">N-glycosylated.</text>
</comment>
<comment type="miscellaneous">
    <text>The influenza A genome consist of 8 RNA segments. Genetic variation of hemagglutinin and/or neuraminidase genes results in the emergence of new influenza strains. The mechanism of variation can be the result of point mutations or the result of genetic reassortment between segments of two different strains.</text>
</comment>
<comment type="similarity">
    <text evidence="1">Belongs to the glycosyl hydrolase 34 family.</text>
</comment>
<reference key="1">
    <citation type="journal article" date="1987" name="Virology">
        <title>Distribution of sequence differences in influenza N9 neuraminidase of tern and whale viruses and crystallization of the whale neuraminidase complexed with antibodies.</title>
        <authorList>
            <person name="Air G.M."/>
            <person name="Webster R.G."/>
            <person name="Colman P.M."/>
            <person name="Laver W.G."/>
        </authorList>
    </citation>
    <scope>NUCLEOTIDE SEQUENCE [GENOMIC RNA]</scope>
</reference>
<reference key="2">
    <citation type="journal article" date="2004" name="Virus Res.">
        <title>Assembly and budding of influenza virus.</title>
        <authorList>
            <person name="Nayak D.P."/>
            <person name="Hui E.K."/>
            <person name="Barman S."/>
        </authorList>
    </citation>
    <scope>REVIEW</scope>
</reference>
<reference key="3">
    <citation type="journal article" date="2005" name="N. Engl. J. Med.">
        <title>Neuraminidase inhibitors for influenza.</title>
        <authorList>
            <person name="Moscona A."/>
        </authorList>
    </citation>
    <scope>REVIEW</scope>
</reference>
<reference key="4">
    <citation type="journal article" date="2005" name="Biol. Pharm. Bull.">
        <title>Sialobiology of influenza: molecular mechanism of host range variation of influenza viruses.</title>
        <authorList>
            <person name="Suzuki Y."/>
        </authorList>
    </citation>
    <scope>REVIEW</scope>
</reference>
<reference key="5">
    <citation type="journal article" date="1994" name="Structure">
        <title>The structure of a complex between the NC10 antibody and influenza virus neuraminidase and comparison with the overlapping binding site of the NC41 antibody.</title>
        <authorList>
            <person name="Malby R.L."/>
            <person name="Tulip W.R."/>
            <person name="Harley V.R."/>
            <person name="McKimm-Breschkin J.L."/>
            <person name="Laver W.G."/>
            <person name="Webster R.G."/>
            <person name="Colman P.M."/>
        </authorList>
    </citation>
    <scope>X-RAY CRYSTALLOGRAPHY (2.20 ANGSTROMS) IN COMPLEX WITH CALCIUM; SUBSTRATE ANALOG AND THE NC10 ANTIBODY</scope>
    <scope>SUBUNIT</scope>
    <scope>DISULFIDE BONDS</scope>
    <scope>GLYCOSYLATION AT ASN-87 AND ASN-147</scope>
</reference>
<reference key="6">
    <citation type="journal article" date="1994" name="Biochemistry">
        <title>N9 neuraminidase complexes with antibodies NC41 and NC10: empirical free energy calculations capture specificity trends observed with mutant binding data.</title>
        <authorList>
            <person name="Tulip W.R."/>
            <person name="Harley V.R."/>
            <person name="Webster R.G."/>
            <person name="Novotny J."/>
        </authorList>
    </citation>
    <scope>X-RAY CRYSTALLOGRAPHY (3.00 ANGSTROMS) OF 83-470 IN COMPLEX WITH ANTIBODIES NC41 AND NC10</scope>
    <scope>GLYCOSYLATION AT ASN-87 AND ASN-202</scope>
</reference>
<keyword id="KW-0002">3D-structure</keyword>
<keyword id="KW-0106">Calcium</keyword>
<keyword id="KW-1015">Disulfide bond</keyword>
<keyword id="KW-0325">Glycoprotein</keyword>
<keyword id="KW-0326">Glycosidase</keyword>
<keyword id="KW-1032">Host cell membrane</keyword>
<keyword id="KW-1043">Host membrane</keyword>
<keyword id="KW-0378">Hydrolase</keyword>
<keyword id="KW-0472">Membrane</keyword>
<keyword id="KW-0479">Metal-binding</keyword>
<keyword id="KW-0735">Signal-anchor</keyword>
<keyword id="KW-0812">Transmembrane</keyword>
<keyword id="KW-1133">Transmembrane helix</keyword>
<keyword id="KW-0946">Virion</keyword>
<name>NRAM_I84A1</name>